<reference key="1">
    <citation type="submission" date="2007-03" db="EMBL/GenBank/DDBJ databases">
        <title>Complete sequence of chromosome of Methanococcus maripaludis C5.</title>
        <authorList>
            <consortium name="US DOE Joint Genome Institute"/>
            <person name="Copeland A."/>
            <person name="Lucas S."/>
            <person name="Lapidus A."/>
            <person name="Barry K."/>
            <person name="Glavina del Rio T."/>
            <person name="Dalin E."/>
            <person name="Tice H."/>
            <person name="Pitluck S."/>
            <person name="Chertkov O."/>
            <person name="Brettin T."/>
            <person name="Bruce D."/>
            <person name="Han C."/>
            <person name="Detter J.C."/>
            <person name="Schmutz J."/>
            <person name="Larimer F."/>
            <person name="Land M."/>
            <person name="Hauser L."/>
            <person name="Kyrpides N."/>
            <person name="Mikhailova N."/>
            <person name="Sieprawska-Lupa M."/>
            <person name="Whitman W.B."/>
            <person name="Richardson P."/>
        </authorList>
    </citation>
    <scope>NUCLEOTIDE SEQUENCE [LARGE SCALE GENOMIC DNA]</scope>
    <source>
        <strain>C5 / ATCC BAA-1333</strain>
    </source>
</reference>
<accession>A4FXW8</accession>
<organism>
    <name type="scientific">Methanococcus maripaludis (strain C5 / ATCC BAA-1333)</name>
    <dbReference type="NCBI Taxonomy" id="402880"/>
    <lineage>
        <taxon>Archaea</taxon>
        <taxon>Methanobacteriati</taxon>
        <taxon>Methanobacteriota</taxon>
        <taxon>Methanomada group</taxon>
        <taxon>Methanococci</taxon>
        <taxon>Methanococcales</taxon>
        <taxon>Methanococcaceae</taxon>
        <taxon>Methanococcus</taxon>
    </lineage>
</organism>
<feature type="chain" id="PRO_1000147675" description="UPF0254 protein MmarC5_0742">
    <location>
        <begin position="1"/>
        <end position="165"/>
    </location>
</feature>
<comment type="similarity">
    <text evidence="1">Belongs to the UPF0254 family.</text>
</comment>
<proteinExistence type="inferred from homology"/>
<name>Y742_METM5</name>
<evidence type="ECO:0000255" key="1">
    <source>
        <dbReference type="HAMAP-Rule" id="MF_00673"/>
    </source>
</evidence>
<sequence length="165" mass="18271">MISVATAECFTHGKIGIKIHKMACGYRELEKDPNYGIINGNVFVMASMFLPSKKGIESILNVKLPEPDYVFKYSKAYTQENDILVAKMVANALKNKLKCNIAISSTAGVGKGAVCILTDNNEYVFTSDVYGDLIKGENILKRQTNGLNKSFDTFVEILKKEYGLK</sequence>
<dbReference type="EMBL" id="CP000609">
    <property type="protein sequence ID" value="ABO35052.1"/>
    <property type="molecule type" value="Genomic_DNA"/>
</dbReference>
<dbReference type="RefSeq" id="WP_011868506.1">
    <property type="nucleotide sequence ID" value="NC_009135.1"/>
</dbReference>
<dbReference type="SMR" id="A4FXW8"/>
<dbReference type="STRING" id="402880.MmarC5_0742"/>
<dbReference type="GeneID" id="4928133"/>
<dbReference type="KEGG" id="mmq:MmarC5_0742"/>
<dbReference type="eggNOG" id="arCOG04865">
    <property type="taxonomic scope" value="Archaea"/>
</dbReference>
<dbReference type="HOGENOM" id="CLU_1451416_0_0_2"/>
<dbReference type="OrthoDB" id="59686at2157"/>
<dbReference type="Proteomes" id="UP000000253">
    <property type="component" value="Chromosome"/>
</dbReference>
<dbReference type="HAMAP" id="MF_00673">
    <property type="entry name" value="UPF0254"/>
    <property type="match status" value="1"/>
</dbReference>
<dbReference type="InterPro" id="IPR009625">
    <property type="entry name" value="HcgF"/>
</dbReference>
<dbReference type="NCBIfam" id="NF002122">
    <property type="entry name" value="PRK00962.1"/>
    <property type="match status" value="1"/>
</dbReference>
<dbReference type="Pfam" id="PF06787">
    <property type="entry name" value="HcgF"/>
    <property type="match status" value="1"/>
</dbReference>
<gene>
    <name type="ordered locus">MmarC5_0742</name>
</gene>
<protein>
    <recommendedName>
        <fullName evidence="1">UPF0254 protein MmarC5_0742</fullName>
    </recommendedName>
</protein>